<dbReference type="EC" id="6.1.1.14" evidence="1"/>
<dbReference type="EMBL" id="BA000002">
    <property type="protein sequence ID" value="BAA80640.1"/>
    <property type="molecule type" value="Genomic_DNA"/>
</dbReference>
<dbReference type="PIR" id="C72544">
    <property type="entry name" value="C72544"/>
</dbReference>
<dbReference type="RefSeq" id="WP_010866503.1">
    <property type="nucleotide sequence ID" value="NC_000854.2"/>
</dbReference>
<dbReference type="SMR" id="Q9YBF8"/>
<dbReference type="STRING" id="272557.APE_1639"/>
<dbReference type="EnsemblBacteria" id="BAA80640">
    <property type="protein sequence ID" value="BAA80640"/>
    <property type="gene ID" value="APE_1639"/>
</dbReference>
<dbReference type="GeneID" id="1446146"/>
<dbReference type="KEGG" id="ape:APE_1639"/>
<dbReference type="PATRIC" id="fig|272557.25.peg.1107"/>
<dbReference type="eggNOG" id="arCOG00405">
    <property type="taxonomic scope" value="Archaea"/>
</dbReference>
<dbReference type="BRENDA" id="6.1.1.14">
    <property type="organism ID" value="171"/>
</dbReference>
<dbReference type="Proteomes" id="UP000002518">
    <property type="component" value="Chromosome"/>
</dbReference>
<dbReference type="GO" id="GO:0005737">
    <property type="term" value="C:cytoplasm"/>
    <property type="evidence" value="ECO:0007669"/>
    <property type="project" value="UniProtKB-SubCell"/>
</dbReference>
<dbReference type="GO" id="GO:0005524">
    <property type="term" value="F:ATP binding"/>
    <property type="evidence" value="ECO:0007669"/>
    <property type="project" value="UniProtKB-UniRule"/>
</dbReference>
<dbReference type="GO" id="GO:0004820">
    <property type="term" value="F:glycine-tRNA ligase activity"/>
    <property type="evidence" value="ECO:0000250"/>
    <property type="project" value="UniProtKB"/>
</dbReference>
<dbReference type="GO" id="GO:0046983">
    <property type="term" value="F:protein dimerization activity"/>
    <property type="evidence" value="ECO:0000250"/>
    <property type="project" value="UniProtKB"/>
</dbReference>
<dbReference type="GO" id="GO:0006426">
    <property type="term" value="P:glycyl-tRNA aminoacylation"/>
    <property type="evidence" value="ECO:0007669"/>
    <property type="project" value="UniProtKB-UniRule"/>
</dbReference>
<dbReference type="CDD" id="cd00774">
    <property type="entry name" value="GlyRS-like_core"/>
    <property type="match status" value="1"/>
</dbReference>
<dbReference type="CDD" id="cd00858">
    <property type="entry name" value="GlyRS_anticodon"/>
    <property type="match status" value="1"/>
</dbReference>
<dbReference type="FunFam" id="3.30.40.230:FF:000005">
    <property type="entry name" value="Glycine--tRNA ligase"/>
    <property type="match status" value="1"/>
</dbReference>
<dbReference type="Gene3D" id="3.30.40.230">
    <property type="match status" value="1"/>
</dbReference>
<dbReference type="Gene3D" id="3.40.50.800">
    <property type="entry name" value="Anticodon-binding domain"/>
    <property type="match status" value="1"/>
</dbReference>
<dbReference type="Gene3D" id="3.30.930.10">
    <property type="entry name" value="Bira Bifunctional Protein, Domain 2"/>
    <property type="match status" value="1"/>
</dbReference>
<dbReference type="HAMAP" id="MF_00253_A">
    <property type="entry name" value="Gly_tRNA_synth_A"/>
    <property type="match status" value="1"/>
</dbReference>
<dbReference type="InterPro" id="IPR006195">
    <property type="entry name" value="aa-tRNA-synth_II"/>
</dbReference>
<dbReference type="InterPro" id="IPR045864">
    <property type="entry name" value="aa-tRNA-synth_II/BPL/LPL"/>
</dbReference>
<dbReference type="InterPro" id="IPR004154">
    <property type="entry name" value="Anticodon-bd"/>
</dbReference>
<dbReference type="InterPro" id="IPR036621">
    <property type="entry name" value="Anticodon-bd_dom_sf"/>
</dbReference>
<dbReference type="InterPro" id="IPR027031">
    <property type="entry name" value="Gly-tRNA_synthase/POLG2"/>
</dbReference>
<dbReference type="InterPro" id="IPR022960">
    <property type="entry name" value="Gly_tRNA_ligase_arc"/>
</dbReference>
<dbReference type="InterPro" id="IPR033731">
    <property type="entry name" value="GlyRS-like_core"/>
</dbReference>
<dbReference type="InterPro" id="IPR002315">
    <property type="entry name" value="tRNA-synt_gly"/>
</dbReference>
<dbReference type="NCBIfam" id="TIGR00389">
    <property type="entry name" value="glyS_dimeric"/>
    <property type="match status" value="1"/>
</dbReference>
<dbReference type="NCBIfam" id="NF003211">
    <property type="entry name" value="PRK04173.1"/>
    <property type="match status" value="1"/>
</dbReference>
<dbReference type="PANTHER" id="PTHR10745:SF0">
    <property type="entry name" value="GLYCINE--TRNA LIGASE"/>
    <property type="match status" value="1"/>
</dbReference>
<dbReference type="PANTHER" id="PTHR10745">
    <property type="entry name" value="GLYCYL-TRNA SYNTHETASE/DNA POLYMERASE SUBUNIT GAMMA-2"/>
    <property type="match status" value="1"/>
</dbReference>
<dbReference type="Pfam" id="PF03129">
    <property type="entry name" value="HGTP_anticodon"/>
    <property type="match status" value="1"/>
</dbReference>
<dbReference type="PRINTS" id="PR01043">
    <property type="entry name" value="TRNASYNTHGLY"/>
</dbReference>
<dbReference type="SUPFAM" id="SSF52954">
    <property type="entry name" value="Class II aaRS ABD-related"/>
    <property type="match status" value="1"/>
</dbReference>
<dbReference type="SUPFAM" id="SSF55681">
    <property type="entry name" value="Class II aaRS and biotin synthetases"/>
    <property type="match status" value="1"/>
</dbReference>
<dbReference type="PROSITE" id="PS50862">
    <property type="entry name" value="AA_TRNA_LIGASE_II"/>
    <property type="match status" value="1"/>
</dbReference>
<gene>
    <name evidence="1" type="primary">glyS</name>
    <name type="ordered locus">APE_1639</name>
</gene>
<feature type="chain" id="PRO_0000072988" description="Glycine--tRNA ligase">
    <location>
        <begin position="1"/>
        <end position="583"/>
    </location>
</feature>
<feature type="binding site" evidence="1">
    <location>
        <position position="100"/>
    </location>
    <ligand>
        <name>substrate</name>
    </ligand>
</feature>
<feature type="binding site" evidence="1">
    <location>
        <position position="166"/>
    </location>
    <ligand>
        <name>substrate</name>
    </ligand>
</feature>
<feature type="binding site" evidence="1">
    <location>
        <begin position="198"/>
        <end position="200"/>
    </location>
    <ligand>
        <name>ATP</name>
        <dbReference type="ChEBI" id="CHEBI:30616"/>
    </ligand>
</feature>
<feature type="binding site" evidence="1">
    <location>
        <begin position="208"/>
        <end position="213"/>
    </location>
    <ligand>
        <name>ATP</name>
        <dbReference type="ChEBI" id="CHEBI:30616"/>
    </ligand>
</feature>
<feature type="binding site" evidence="1">
    <location>
        <begin position="213"/>
        <end position="217"/>
    </location>
    <ligand>
        <name>substrate</name>
    </ligand>
</feature>
<feature type="binding site" evidence="1">
    <location>
        <begin position="328"/>
        <end position="329"/>
    </location>
    <ligand>
        <name>ATP</name>
        <dbReference type="ChEBI" id="CHEBI:30616"/>
    </ligand>
</feature>
<feature type="binding site" evidence="1">
    <location>
        <begin position="439"/>
        <end position="443"/>
    </location>
    <ligand>
        <name>substrate</name>
    </ligand>
</feature>
<feature type="binding site" evidence="1">
    <location>
        <begin position="443"/>
        <end position="446"/>
    </location>
    <ligand>
        <name>ATP</name>
        <dbReference type="ChEBI" id="CHEBI:30616"/>
    </ligand>
</feature>
<comment type="function">
    <text evidence="1">Catalyzes the attachment of glycine to tRNA(Gly).</text>
</comment>
<comment type="catalytic activity">
    <reaction evidence="1">
        <text>tRNA(Gly) + glycine + ATP = glycyl-tRNA(Gly) + AMP + diphosphate</text>
        <dbReference type="Rhea" id="RHEA:16013"/>
        <dbReference type="Rhea" id="RHEA-COMP:9664"/>
        <dbReference type="Rhea" id="RHEA-COMP:9683"/>
        <dbReference type="ChEBI" id="CHEBI:30616"/>
        <dbReference type="ChEBI" id="CHEBI:33019"/>
        <dbReference type="ChEBI" id="CHEBI:57305"/>
        <dbReference type="ChEBI" id="CHEBI:78442"/>
        <dbReference type="ChEBI" id="CHEBI:78522"/>
        <dbReference type="ChEBI" id="CHEBI:456215"/>
        <dbReference type="EC" id="6.1.1.14"/>
    </reaction>
</comment>
<comment type="subcellular location">
    <subcellularLocation>
        <location evidence="1">Cytoplasm</location>
    </subcellularLocation>
</comment>
<comment type="similarity">
    <text evidence="1">Belongs to the class-II aminoacyl-tRNA synthetase family.</text>
</comment>
<proteinExistence type="inferred from homology"/>
<accession>Q9YBF8</accession>
<name>SYG_AERPE</name>
<reference key="1">
    <citation type="journal article" date="1999" name="DNA Res.">
        <title>Complete genome sequence of an aerobic hyper-thermophilic crenarchaeon, Aeropyrum pernix K1.</title>
        <authorList>
            <person name="Kawarabayasi Y."/>
            <person name="Hino Y."/>
            <person name="Horikawa H."/>
            <person name="Yamazaki S."/>
            <person name="Haikawa Y."/>
            <person name="Jin-no K."/>
            <person name="Takahashi M."/>
            <person name="Sekine M."/>
            <person name="Baba S."/>
            <person name="Ankai A."/>
            <person name="Kosugi H."/>
            <person name="Hosoyama A."/>
            <person name="Fukui S."/>
            <person name="Nagai Y."/>
            <person name="Nishijima K."/>
            <person name="Nakazawa H."/>
            <person name="Takamiya M."/>
            <person name="Masuda S."/>
            <person name="Funahashi T."/>
            <person name="Tanaka T."/>
            <person name="Kudoh Y."/>
            <person name="Yamazaki J."/>
            <person name="Kushida N."/>
            <person name="Oguchi A."/>
            <person name="Aoki K."/>
            <person name="Kubota K."/>
            <person name="Nakamura Y."/>
            <person name="Nomura N."/>
            <person name="Sako Y."/>
            <person name="Kikuchi H."/>
        </authorList>
    </citation>
    <scope>NUCLEOTIDE SEQUENCE [LARGE SCALE GENOMIC DNA]</scope>
    <source>
        <strain>ATCC 700893 / DSM 11879 / JCM 9820 / NBRC 100138 / K1</strain>
    </source>
</reference>
<organism>
    <name type="scientific">Aeropyrum pernix (strain ATCC 700893 / DSM 11879 / JCM 9820 / NBRC 100138 / K1)</name>
    <dbReference type="NCBI Taxonomy" id="272557"/>
    <lineage>
        <taxon>Archaea</taxon>
        <taxon>Thermoproteota</taxon>
        <taxon>Thermoprotei</taxon>
        <taxon>Desulfurococcales</taxon>
        <taxon>Desulfurococcaceae</taxon>
        <taxon>Aeropyrum</taxon>
    </lineage>
</organism>
<keyword id="KW-0030">Aminoacyl-tRNA synthetase</keyword>
<keyword id="KW-0067">ATP-binding</keyword>
<keyword id="KW-0963">Cytoplasm</keyword>
<keyword id="KW-0436">Ligase</keyword>
<keyword id="KW-0547">Nucleotide-binding</keyword>
<keyword id="KW-0648">Protein biosynthesis</keyword>
<keyword id="KW-1185">Reference proteome</keyword>
<sequence>MAEDLFEKLVEIGKRRGFFWPSYEIYGGVAGFYDWGPLGHLLKRRIIEKWRRYFVLMHQDHVVEIETPVIGPEKVYIASGHVEHFTDPIVRCTSCGRTFRADHLVEEALGINAEGLSVSELDRIIRERGLRCPVCQGELGRVETFNLLFRTQIGPYEGSVGYLRPELAQGIFVAFKRVYEAMRSRIPLGIAQVGRVGRNEISPRQALVRLREFTIMEMEYFIDPEDQWGSCPFFHRMADSKLPILTYEAKRRGEEKPESFKLEEAVNEGVVISPCLGYWMAVGMRFVEDLGVPSDSIMFEEKGPEERAHYSSQTFDQLVKVSRWGWIEVAGHSYRGDYDLSRHMKYSGQDLTAFKPYPKPIVVKKRRVVVDKAAIGRALKSRAKTVLEELGRMGEGELERLAASNRAVVAGVELPPGSLRIVEVEEKVSGRRFVPHVVEPSFGTDRNVYVALEYAYREVEGRVVLAFPRDIAPVQAVVLPLVENDEKLVERARMVYETLVEAGFTVYYDDSGSIGRRYARADEIGVPAAVTIDYQTLEDGTVTLRDRDTWRQVRIGADEVVDKLRRFIYDGARLEDLGTPVKP</sequence>
<protein>
    <recommendedName>
        <fullName evidence="1">Glycine--tRNA ligase</fullName>
        <ecNumber evidence="1">6.1.1.14</ecNumber>
    </recommendedName>
    <alternativeName>
        <fullName evidence="1">Glycyl-tRNA synthetase</fullName>
        <shortName evidence="1">GlyRS</shortName>
    </alternativeName>
</protein>
<evidence type="ECO:0000255" key="1">
    <source>
        <dbReference type="HAMAP-Rule" id="MF_00253"/>
    </source>
</evidence>